<reference evidence="8" key="1">
    <citation type="journal article" date="2020" name="PLoS Genet.">
        <title>Dramatically diverse Schizosaccharomyces pombe wtf meiotic drivers all display high gamete-killing efficiency.</title>
        <authorList>
            <person name="Bravo Nunez M.A."/>
            <person name="Sabbarini I.M."/>
            <person name="Eickbush M.T."/>
            <person name="Liang Y."/>
            <person name="Lange J.J."/>
            <person name="Kent A.M."/>
            <person name="Zanders S.E."/>
        </authorList>
    </citation>
    <scope>NUCLEOTIDE SEQUENCE [GENOMIC DNA]</scope>
    <scope>FUNCTION</scope>
    <scope>ALTERNATIVE INITIATION (ISOFORMS 1 AND 2)</scope>
</reference>
<evidence type="ECO:0000250" key="1">
    <source>
        <dbReference type="UniProtKB" id="A0A218N034"/>
    </source>
</evidence>
<evidence type="ECO:0000250" key="2">
    <source>
        <dbReference type="UniProtKB" id="O74420"/>
    </source>
</evidence>
<evidence type="ECO:0000255" key="3"/>
<evidence type="ECO:0000256" key="4">
    <source>
        <dbReference type="SAM" id="MobiDB-lite"/>
    </source>
</evidence>
<evidence type="ECO:0000269" key="5">
    <source>
    </source>
</evidence>
<evidence type="ECO:0000303" key="6">
    <source>
    </source>
</evidence>
<evidence type="ECO:0000305" key="7"/>
<evidence type="ECO:0000312" key="8">
    <source>
        <dbReference type="EMBL" id="QBL54519.1"/>
    </source>
</evidence>
<dbReference type="EMBL" id="MH837457">
    <property type="protein sequence ID" value="QBL54519.1"/>
    <property type="molecule type" value="Genomic_DNA"/>
</dbReference>
<dbReference type="GO" id="GO:0072324">
    <property type="term" value="C:ascus epiplasm"/>
    <property type="evidence" value="ECO:0000305"/>
    <property type="project" value="UniProtKB"/>
</dbReference>
<dbReference type="GO" id="GO:0005737">
    <property type="term" value="C:cytoplasm"/>
    <property type="evidence" value="ECO:0000305"/>
    <property type="project" value="UniProtKB"/>
</dbReference>
<dbReference type="GO" id="GO:0005789">
    <property type="term" value="C:endoplasmic reticulum membrane"/>
    <property type="evidence" value="ECO:0007669"/>
    <property type="project" value="UniProtKB-SubCell"/>
</dbReference>
<dbReference type="GO" id="GO:0005774">
    <property type="term" value="C:vacuolar membrane"/>
    <property type="evidence" value="ECO:0007669"/>
    <property type="project" value="UniProtKB-SubCell"/>
</dbReference>
<dbReference type="GO" id="GO:0110134">
    <property type="term" value="P:meiotic drive"/>
    <property type="evidence" value="ECO:0000314"/>
    <property type="project" value="UniProtKB"/>
</dbReference>
<dbReference type="InterPro" id="IPR004982">
    <property type="entry name" value="WTF"/>
</dbReference>
<dbReference type="Pfam" id="PF03303">
    <property type="entry name" value="WTF"/>
    <property type="match status" value="2"/>
</dbReference>
<keyword id="KW-0024">Alternative initiation</keyword>
<keyword id="KW-0963">Cytoplasm</keyword>
<keyword id="KW-0256">Endoplasmic reticulum</keyword>
<keyword id="KW-0472">Membrane</keyword>
<keyword id="KW-0800">Toxin</keyword>
<keyword id="KW-0812">Transmembrane</keyword>
<keyword id="KW-1133">Transmembrane helix</keyword>
<keyword id="KW-0926">Vacuole</keyword>
<accession>A0A482AS24</accession>
<organism evidence="8">
    <name type="scientific">Schizosaccharomyces kambucha</name>
    <name type="common">Fission yeast</name>
    <dbReference type="NCBI Taxonomy" id="204045"/>
    <lineage>
        <taxon>Eukaryota</taxon>
        <taxon>Fungi</taxon>
        <taxon>Dikarya</taxon>
        <taxon>Ascomycota</taxon>
        <taxon>Taphrinomycotina</taxon>
        <taxon>Schizosaccharomycetes</taxon>
        <taxon>Schizosaccharomycetales</taxon>
        <taxon>Schizosaccharomycetaceae</taxon>
        <taxon>Schizosaccharomyces</taxon>
    </lineage>
</organism>
<feature type="chain" id="PRO_0000452271" description="Meiotic driver wtf33">
    <location>
        <begin position="1"/>
        <end position="411"/>
    </location>
</feature>
<feature type="transmembrane region" description="Helical" evidence="3">
    <location>
        <begin position="104"/>
        <end position="124"/>
    </location>
</feature>
<feature type="transmembrane region" description="Helical" evidence="3">
    <location>
        <begin position="137"/>
        <end position="157"/>
    </location>
</feature>
<feature type="transmembrane region" description="Helical" evidence="3">
    <location>
        <begin position="244"/>
        <end position="264"/>
    </location>
</feature>
<feature type="transmembrane region" description="Helical" evidence="3">
    <location>
        <begin position="281"/>
        <end position="301"/>
    </location>
</feature>
<feature type="transmembrane region" description="Helical" evidence="3">
    <location>
        <begin position="303"/>
        <end position="323"/>
    </location>
</feature>
<feature type="transmembrane region" description="Helical" evidence="3">
    <location>
        <begin position="336"/>
        <end position="356"/>
    </location>
</feature>
<feature type="region of interest" description="Disordered" evidence="4">
    <location>
        <begin position="1"/>
        <end position="95"/>
    </location>
</feature>
<feature type="compositionally biased region" description="Basic and acidic residues" evidence="4">
    <location>
        <begin position="11"/>
        <end position="29"/>
    </location>
</feature>
<feature type="compositionally biased region" description="Polar residues" evidence="4">
    <location>
        <begin position="57"/>
        <end position="72"/>
    </location>
</feature>
<feature type="splice variant" id="VSP_060939" description="In isoform 2." evidence="5">
    <location>
        <begin position="1"/>
        <end position="55"/>
    </location>
</feature>
<sequence>MKNKYYPLRSSMDELSTKNDNEIDLEKGPLPEYNSEDGSTLPPYSENLNLKDPKQMGANNPNLFNTDESTTPPDYGEDSLSTTHRENHSSGTADNSCASTLKKAILSFIPIFVLNVSAVCYLTYKDALFKDYGKDEWVYFGMWCASCLMILISLWCFYETWIKAVKVTAVFLAQCIKVTAVFLPQCIKVTAVFLAKCVKVTAVFLAKCIKVTAVFLAQCVKVTAISLAKCVKVISIGLFNIRREMMIIIWILWLIICCILFGCVKDGRLNFNKALICSTCTISAVLFLIVSSVCIPIWTLWRALSGMLQVLGIHGIIAVLVNGSMSLFGKHFGWRGYEIEGFVLFFTSSALFLYEMERPGVLKRMRNTTGNVIGYICGVIGDAFRRIENAFRGANDNNNIPLGEMDVEGEV</sequence>
<protein>
    <recommendedName>
        <fullName evidence="6">Meiotic driver wtf33</fullName>
    </recommendedName>
</protein>
<name>WTF33_SCHKA</name>
<proteinExistence type="inferred from homology"/>
<gene>
    <name evidence="8" type="primary">wtf33</name>
</gene>
<comment type="function">
    <text evidence="5">Promotes unequal transmission of alleles from the parental zygote to progeny spores by acting as poison/antidote system where the poison and antidote proteins are produced from the same locus; the poison component is trans-acting and targets all spores within an ascus whereas the antidote component is spore-specific, leading to poisoning of all progeny that do not inherit the allele.</text>
</comment>
<comment type="function">
    <molecule>Isoform 1</molecule>
    <text evidence="1">Localizes isoform 2 to the vacuole thereby facilitating its degradation.</text>
</comment>
<comment type="function">
    <molecule>Isoform 2</molecule>
    <text evidence="1">Forms toxic aggregates that disrupt spore maturation.</text>
</comment>
<comment type="subunit">
    <text evidence="1 2">Homomer (By similarity). Forms protein aggregates (By similarity). The two isoforms can interact with each other and with themselves (By similarity). High sequence similarity is required for their interaction (By similarity).</text>
</comment>
<comment type="subcellular location">
    <molecule>Isoform 1</molecule>
    <subcellularLocation>
        <location evidence="1 3">Spore membrane</location>
        <topology evidence="3">Multi-pass membrane protein</topology>
    </subcellularLocation>
    <subcellularLocation>
        <location evidence="1 3">Vacuole membrane</location>
        <topology evidence="3">Multi-pass membrane protein</topology>
    </subcellularLocation>
    <text evidence="1">Contained within spores expressing the isoform and localizes isoform 2 to the vacuole.</text>
</comment>
<comment type="subcellular location">
    <molecule>Isoform 2</molecule>
    <subcellularLocation>
        <location evidence="1">Ascus epiplasm</location>
    </subcellularLocation>
    <subcellularLocation>
        <location evidence="1">Cytoplasm</location>
    </subcellularLocation>
    <subcellularLocation>
        <location evidence="1 3">Spore membrane</location>
        <topology evidence="3">Multi-pass membrane protein</topology>
    </subcellularLocation>
    <subcellularLocation>
        <location evidence="1 3">Vacuole membrane</location>
        <topology evidence="3">Multi-pass membrane protein</topology>
    </subcellularLocation>
    <subcellularLocation>
        <location evidence="1 3">Endoplasmic reticulum membrane</location>
        <topology evidence="3">Multi-pass membrane protein</topology>
    </subcellularLocation>
    <text evidence="1">Localizes in trans to all spores within an ascus. Localization to the spore vacuole is dependent on isoform 1.</text>
</comment>
<comment type="alternative products">
    <event type="alternative initiation"/>
    <isoform>
        <id>A0A482AS24-1</id>
        <name>1</name>
        <name evidence="6">Antidote</name>
        <name evidence="7">Suppressor</name>
        <sequence type="displayed"/>
    </isoform>
    <isoform>
        <id>A0A482AS24-2</id>
        <name>2</name>
        <name evidence="6">Poison</name>
        <sequence type="described" ref="VSP_060939"/>
    </isoform>
</comment>
<comment type="similarity">
    <text evidence="7">Belongs to the WTF family.</text>
</comment>